<protein>
    <recommendedName>
        <fullName evidence="1">Small ribosomal subunit protein bS20</fullName>
    </recommendedName>
    <alternativeName>
        <fullName evidence="3">30S ribosomal protein S20</fullName>
    </alternativeName>
</protein>
<sequence>MANTAQARKRARQNTKRRQNSASQRSMVRTYLKRVDAAIAAKDYDAATEAYKKAVPVLDRMADKGILHKNKAARRKSRLNKTIKGLQA</sequence>
<keyword id="KW-1185">Reference proteome</keyword>
<keyword id="KW-0687">Ribonucleoprotein</keyword>
<keyword id="KW-0689">Ribosomal protein</keyword>
<keyword id="KW-0694">RNA-binding</keyword>
<keyword id="KW-0699">rRNA-binding</keyword>
<accession>Q4FRM3</accession>
<evidence type="ECO:0000255" key="1">
    <source>
        <dbReference type="HAMAP-Rule" id="MF_00500"/>
    </source>
</evidence>
<evidence type="ECO:0000256" key="2">
    <source>
        <dbReference type="SAM" id="MobiDB-lite"/>
    </source>
</evidence>
<evidence type="ECO:0000305" key="3"/>
<dbReference type="EMBL" id="CP000082">
    <property type="protein sequence ID" value="AAZ19335.1"/>
    <property type="molecule type" value="Genomic_DNA"/>
</dbReference>
<dbReference type="RefSeq" id="WP_011280753.1">
    <property type="nucleotide sequence ID" value="NC_007204.1"/>
</dbReference>
<dbReference type="SMR" id="Q4FRM3"/>
<dbReference type="STRING" id="259536.Psyc_1487"/>
<dbReference type="KEGG" id="par:Psyc_1487"/>
<dbReference type="eggNOG" id="COG0268">
    <property type="taxonomic scope" value="Bacteria"/>
</dbReference>
<dbReference type="HOGENOM" id="CLU_160655_4_0_6"/>
<dbReference type="OrthoDB" id="9807974at2"/>
<dbReference type="Proteomes" id="UP000000546">
    <property type="component" value="Chromosome"/>
</dbReference>
<dbReference type="GO" id="GO:0005829">
    <property type="term" value="C:cytosol"/>
    <property type="evidence" value="ECO:0007669"/>
    <property type="project" value="TreeGrafter"/>
</dbReference>
<dbReference type="GO" id="GO:0015935">
    <property type="term" value="C:small ribosomal subunit"/>
    <property type="evidence" value="ECO:0007669"/>
    <property type="project" value="TreeGrafter"/>
</dbReference>
<dbReference type="GO" id="GO:0070181">
    <property type="term" value="F:small ribosomal subunit rRNA binding"/>
    <property type="evidence" value="ECO:0007669"/>
    <property type="project" value="TreeGrafter"/>
</dbReference>
<dbReference type="GO" id="GO:0003735">
    <property type="term" value="F:structural constituent of ribosome"/>
    <property type="evidence" value="ECO:0007669"/>
    <property type="project" value="InterPro"/>
</dbReference>
<dbReference type="GO" id="GO:0006412">
    <property type="term" value="P:translation"/>
    <property type="evidence" value="ECO:0007669"/>
    <property type="project" value="UniProtKB-UniRule"/>
</dbReference>
<dbReference type="FunFam" id="1.20.58.110:FF:000001">
    <property type="entry name" value="30S ribosomal protein S20"/>
    <property type="match status" value="1"/>
</dbReference>
<dbReference type="Gene3D" id="1.20.58.110">
    <property type="entry name" value="Ribosomal protein S20"/>
    <property type="match status" value="1"/>
</dbReference>
<dbReference type="HAMAP" id="MF_00500">
    <property type="entry name" value="Ribosomal_bS20"/>
    <property type="match status" value="1"/>
</dbReference>
<dbReference type="InterPro" id="IPR002583">
    <property type="entry name" value="Ribosomal_bS20"/>
</dbReference>
<dbReference type="InterPro" id="IPR036510">
    <property type="entry name" value="Ribosomal_bS20_sf"/>
</dbReference>
<dbReference type="NCBIfam" id="TIGR00029">
    <property type="entry name" value="S20"/>
    <property type="match status" value="1"/>
</dbReference>
<dbReference type="PANTHER" id="PTHR33398">
    <property type="entry name" value="30S RIBOSOMAL PROTEIN S20"/>
    <property type="match status" value="1"/>
</dbReference>
<dbReference type="PANTHER" id="PTHR33398:SF1">
    <property type="entry name" value="SMALL RIBOSOMAL SUBUNIT PROTEIN BS20C"/>
    <property type="match status" value="1"/>
</dbReference>
<dbReference type="Pfam" id="PF01649">
    <property type="entry name" value="Ribosomal_S20p"/>
    <property type="match status" value="1"/>
</dbReference>
<dbReference type="SUPFAM" id="SSF46992">
    <property type="entry name" value="Ribosomal protein S20"/>
    <property type="match status" value="1"/>
</dbReference>
<name>RS20_PSYA2</name>
<comment type="function">
    <text evidence="1">Binds directly to 16S ribosomal RNA.</text>
</comment>
<comment type="similarity">
    <text evidence="1">Belongs to the bacterial ribosomal protein bS20 family.</text>
</comment>
<reference key="1">
    <citation type="journal article" date="2010" name="Appl. Environ. Microbiol.">
        <title>The genome sequence of Psychrobacter arcticus 273-4, a psychroactive Siberian permafrost bacterium, reveals mechanisms for adaptation to low-temperature growth.</title>
        <authorList>
            <person name="Ayala-del-Rio H.L."/>
            <person name="Chain P.S."/>
            <person name="Grzymski J.J."/>
            <person name="Ponder M.A."/>
            <person name="Ivanova N."/>
            <person name="Bergholz P.W."/>
            <person name="Di Bartolo G."/>
            <person name="Hauser L."/>
            <person name="Land M."/>
            <person name="Bakermans C."/>
            <person name="Rodrigues D."/>
            <person name="Klappenbach J."/>
            <person name="Zarka D."/>
            <person name="Larimer F."/>
            <person name="Richardson P."/>
            <person name="Murray A."/>
            <person name="Thomashow M."/>
            <person name="Tiedje J.M."/>
        </authorList>
    </citation>
    <scope>NUCLEOTIDE SEQUENCE [LARGE SCALE GENOMIC DNA]</scope>
    <source>
        <strain>DSM 17307 / VKM B-2377 / 273-4</strain>
    </source>
</reference>
<feature type="chain" id="PRO_0000224982" description="Small ribosomal subunit protein bS20">
    <location>
        <begin position="1"/>
        <end position="88"/>
    </location>
</feature>
<feature type="region of interest" description="Disordered" evidence="2">
    <location>
        <begin position="1"/>
        <end position="26"/>
    </location>
</feature>
<feature type="compositionally biased region" description="Basic residues" evidence="2">
    <location>
        <begin position="7"/>
        <end position="19"/>
    </location>
</feature>
<organism>
    <name type="scientific">Psychrobacter arcticus (strain DSM 17307 / VKM B-2377 / 273-4)</name>
    <dbReference type="NCBI Taxonomy" id="259536"/>
    <lineage>
        <taxon>Bacteria</taxon>
        <taxon>Pseudomonadati</taxon>
        <taxon>Pseudomonadota</taxon>
        <taxon>Gammaproteobacteria</taxon>
        <taxon>Moraxellales</taxon>
        <taxon>Moraxellaceae</taxon>
        <taxon>Psychrobacter</taxon>
    </lineage>
</organism>
<proteinExistence type="inferred from homology"/>
<gene>
    <name evidence="1" type="primary">rpsT</name>
    <name type="ordered locus">Psyc_1487</name>
</gene>